<feature type="chain" id="PRO_0000184765" description="ADP-specific phosphofructokinase">
    <location>
        <begin position="1"/>
        <end position="451"/>
    </location>
</feature>
<feature type="domain" description="ADPK" evidence="1">
    <location>
        <begin position="1"/>
        <end position="450"/>
    </location>
</feature>
<feature type="active site" description="Proton acceptor" evidence="1">
    <location>
        <position position="434"/>
    </location>
</feature>
<feature type="binding site" evidence="1">
    <location>
        <position position="261"/>
    </location>
    <ligand>
        <name>Mg(2+)</name>
        <dbReference type="ChEBI" id="CHEBI:18420"/>
    </ligand>
</feature>
<feature type="binding site" evidence="1">
    <location>
        <position position="291"/>
    </location>
    <ligand>
        <name>Mg(2+)</name>
        <dbReference type="ChEBI" id="CHEBI:18420"/>
    </ligand>
</feature>
<feature type="binding site" evidence="1">
    <location>
        <position position="434"/>
    </location>
    <ligand>
        <name>Mg(2+)</name>
        <dbReference type="ChEBI" id="CHEBI:18420"/>
    </ligand>
</feature>
<gene>
    <name evidence="1" type="primary">pfkC</name>
    <name type="ordered locus">PYRAB05210</name>
    <name type="ORF">PAB2013</name>
</gene>
<protein>
    <recommendedName>
        <fullName evidence="1">ADP-specific phosphofructokinase</fullName>
        <ecNumber evidence="1">2.7.1.146</ecNumber>
    </recommendedName>
    <alternativeName>
        <fullName evidence="1">ADP-dependent phosphofructokinase</fullName>
        <shortName evidence="1">ADP-Pfk</shortName>
    </alternativeName>
</protein>
<name>K6PF_PYRAB</name>
<keyword id="KW-0963">Cytoplasm</keyword>
<keyword id="KW-0324">Glycolysis</keyword>
<keyword id="KW-0418">Kinase</keyword>
<keyword id="KW-0460">Magnesium</keyword>
<keyword id="KW-0479">Metal-binding</keyword>
<keyword id="KW-0808">Transferase</keyword>
<accession>Q9V1A6</accession>
<accession>G8ZGN1</accession>
<comment type="function">
    <text evidence="1">Catalyzes the phosphorylation of fructose 6-phosphate to fructose 1,6-bisphosphate using ADP as the phosphate donor.</text>
</comment>
<comment type="catalytic activity">
    <reaction evidence="1">
        <text>beta-D-fructose 6-phosphate + ADP = beta-D-fructose 1,6-bisphosphate + AMP + H(+)</text>
        <dbReference type="Rhea" id="RHEA:20105"/>
        <dbReference type="ChEBI" id="CHEBI:15378"/>
        <dbReference type="ChEBI" id="CHEBI:32966"/>
        <dbReference type="ChEBI" id="CHEBI:57634"/>
        <dbReference type="ChEBI" id="CHEBI:456215"/>
        <dbReference type="ChEBI" id="CHEBI:456216"/>
        <dbReference type="EC" id="2.7.1.146"/>
    </reaction>
</comment>
<comment type="cofactor">
    <cofactor evidence="1">
        <name>Mg(2+)</name>
        <dbReference type="ChEBI" id="CHEBI:18420"/>
    </cofactor>
    <text evidence="1">Binds 1 Mg(2+) ion per subunit.</text>
</comment>
<comment type="pathway">
    <text evidence="1">Carbohydrate degradation; glycolysis.</text>
</comment>
<comment type="subcellular location">
    <subcellularLocation>
        <location evidence="1">Cytoplasm</location>
    </subcellularLocation>
</comment>
<comment type="similarity">
    <text evidence="1">Belongs to the carbohydrate kinase PfkC family.</text>
</comment>
<evidence type="ECO:0000255" key="1">
    <source>
        <dbReference type="HAMAP-Rule" id="MF_00561"/>
    </source>
</evidence>
<sequence>MSVPQDVSIFTAYNANVDAITKLNGETIQKLINEFGEKEIAERIEEYPREIREPIDFVARLIHALRLGKPTAVPLVDESLNSWFDEKFEYELERLGGQAGIIANVLAGLGIKKVIAYTPFLPKRLADLFKEGVLYPTVENGELKLKPIREAYRDEDPLKINRIFEFRKGTKFKFLGESVEVPASGRFIVSARFESISKIETKEELRPFLDDIGKEVDGAIFSGYQGLRLKYSDGKDANYYLRRAKEDIISLKEEDVKVHVELASIQDRKLRKKVITNILPIADSVGIDEAEIAQLLSVLGYRDLADRIFTYNRLEDSILGGMIILDELNFEILQVHTIYYLMYITHRDNPLSEEELMKSLEFGTTLAAARASLGDINRPEDYEIGLKVPFNERSEYVKLRFEEAKTKLRMREYKVVVIPTRLVPNPVLTVGLGDTISAGAFITYVNYLKRH</sequence>
<dbReference type="EC" id="2.7.1.146" evidence="1"/>
<dbReference type="EMBL" id="AJ248284">
    <property type="protein sequence ID" value="CAB49443.1"/>
    <property type="molecule type" value="Genomic_DNA"/>
</dbReference>
<dbReference type="EMBL" id="HE613800">
    <property type="protein sequence ID" value="CCE69910.1"/>
    <property type="molecule type" value="Genomic_DNA"/>
</dbReference>
<dbReference type="PIR" id="D75170">
    <property type="entry name" value="D75170"/>
</dbReference>
<dbReference type="RefSeq" id="WP_010867645.1">
    <property type="nucleotide sequence ID" value="NC_000868.1"/>
</dbReference>
<dbReference type="SMR" id="Q9V1A6"/>
<dbReference type="STRING" id="272844.PAB2013"/>
<dbReference type="KEGG" id="pab:PAB2013"/>
<dbReference type="PATRIC" id="fig|272844.11.peg.556"/>
<dbReference type="eggNOG" id="arCOG03370">
    <property type="taxonomic scope" value="Archaea"/>
</dbReference>
<dbReference type="HOGENOM" id="CLU_046643_0_0_2"/>
<dbReference type="OrthoDB" id="85200at2157"/>
<dbReference type="PhylomeDB" id="Q9V1A6"/>
<dbReference type="UniPathway" id="UPA00109"/>
<dbReference type="Proteomes" id="UP000000810">
    <property type="component" value="Chromosome"/>
</dbReference>
<dbReference type="Proteomes" id="UP000009139">
    <property type="component" value="Chromosome"/>
</dbReference>
<dbReference type="GO" id="GO:0005737">
    <property type="term" value="C:cytoplasm"/>
    <property type="evidence" value="ECO:0007669"/>
    <property type="project" value="UniProtKB-SubCell"/>
</dbReference>
<dbReference type="GO" id="GO:0043844">
    <property type="term" value="F:ADP-specific phosphofructokinase activity"/>
    <property type="evidence" value="ECO:0007669"/>
    <property type="project" value="UniProtKB-EC"/>
</dbReference>
<dbReference type="GO" id="GO:0000287">
    <property type="term" value="F:magnesium ion binding"/>
    <property type="evidence" value="ECO:0007669"/>
    <property type="project" value="InterPro"/>
</dbReference>
<dbReference type="GO" id="GO:0008443">
    <property type="term" value="F:phosphofructokinase activity"/>
    <property type="evidence" value="ECO:0007669"/>
    <property type="project" value="InterPro"/>
</dbReference>
<dbReference type="GO" id="GO:0006000">
    <property type="term" value="P:fructose metabolic process"/>
    <property type="evidence" value="ECO:0007669"/>
    <property type="project" value="InterPro"/>
</dbReference>
<dbReference type="GO" id="GO:0006096">
    <property type="term" value="P:glycolytic process"/>
    <property type="evidence" value="ECO:0007669"/>
    <property type="project" value="UniProtKB-UniRule"/>
</dbReference>
<dbReference type="Gene3D" id="3.30.1110.20">
    <property type="match status" value="1"/>
</dbReference>
<dbReference type="Gene3D" id="3.40.1190.20">
    <property type="match status" value="1"/>
</dbReference>
<dbReference type="HAMAP" id="MF_00561">
    <property type="entry name" value="ADP_PFKinase"/>
    <property type="match status" value="1"/>
</dbReference>
<dbReference type="InterPro" id="IPR007666">
    <property type="entry name" value="ADP_PFK/GK"/>
</dbReference>
<dbReference type="InterPro" id="IPR015990">
    <property type="entry name" value="ADP_PFK/GK_arc"/>
</dbReference>
<dbReference type="InterPro" id="IPR011790">
    <property type="entry name" value="ADP_PFK_arc"/>
</dbReference>
<dbReference type="InterPro" id="IPR029056">
    <property type="entry name" value="Ribokinase-like"/>
</dbReference>
<dbReference type="NCBIfam" id="TIGR02045">
    <property type="entry name" value="P_fruct_ADP"/>
    <property type="match status" value="1"/>
</dbReference>
<dbReference type="PANTHER" id="PTHR21208">
    <property type="entry name" value="ADP-DEPENDENT GLUCOKINASE"/>
    <property type="match status" value="1"/>
</dbReference>
<dbReference type="PANTHER" id="PTHR21208:SF1">
    <property type="entry name" value="ADP-DEPENDENT GLUCOKINASE"/>
    <property type="match status" value="1"/>
</dbReference>
<dbReference type="Pfam" id="PF04587">
    <property type="entry name" value="ADP_PFK_GK"/>
    <property type="match status" value="1"/>
</dbReference>
<dbReference type="PIRSF" id="PIRSF015883">
    <property type="entry name" value="ADP-Pfk_glckin"/>
    <property type="match status" value="1"/>
</dbReference>
<dbReference type="SUPFAM" id="SSF53613">
    <property type="entry name" value="Ribokinase-like"/>
    <property type="match status" value="1"/>
</dbReference>
<dbReference type="PROSITE" id="PS51255">
    <property type="entry name" value="ADPK"/>
    <property type="match status" value="1"/>
</dbReference>
<organism>
    <name type="scientific">Pyrococcus abyssi (strain GE5 / Orsay)</name>
    <dbReference type="NCBI Taxonomy" id="272844"/>
    <lineage>
        <taxon>Archaea</taxon>
        <taxon>Methanobacteriati</taxon>
        <taxon>Methanobacteriota</taxon>
        <taxon>Thermococci</taxon>
        <taxon>Thermococcales</taxon>
        <taxon>Thermococcaceae</taxon>
        <taxon>Pyrococcus</taxon>
    </lineage>
</organism>
<proteinExistence type="inferred from homology"/>
<reference key="1">
    <citation type="journal article" date="2003" name="Mol. Microbiol.">
        <title>An integrated analysis of the genome of the hyperthermophilic archaeon Pyrococcus abyssi.</title>
        <authorList>
            <person name="Cohen G.N."/>
            <person name="Barbe V."/>
            <person name="Flament D."/>
            <person name="Galperin M."/>
            <person name="Heilig R."/>
            <person name="Lecompte O."/>
            <person name="Poch O."/>
            <person name="Prieur D."/>
            <person name="Querellou J."/>
            <person name="Ripp R."/>
            <person name="Thierry J.-C."/>
            <person name="Van der Oost J."/>
            <person name="Weissenbach J."/>
            <person name="Zivanovic Y."/>
            <person name="Forterre P."/>
        </authorList>
    </citation>
    <scope>NUCLEOTIDE SEQUENCE [LARGE SCALE GENOMIC DNA]</scope>
    <source>
        <strain>GE5 / Orsay</strain>
    </source>
</reference>
<reference key="2">
    <citation type="journal article" date="2012" name="Curr. Microbiol.">
        <title>Re-annotation of two hyperthermophilic archaea Pyrococcus abyssi GE5 and Pyrococcus furiosus DSM 3638.</title>
        <authorList>
            <person name="Gao J."/>
            <person name="Wang J."/>
        </authorList>
    </citation>
    <scope>GENOME REANNOTATION</scope>
    <source>
        <strain>GE5 / Orsay</strain>
    </source>
</reference>